<sequence>MTKSNISKDNGPLDEVEGIKERSNFLRGTIAEGLEDRITGAISDEDNKLLKFHGSYQQDDRDLRDERRRKKLEPAYQFMIRVRTPGGVTTPEQWLVMDDLAHKYANGSMRLTTRQTFQLHGIVKWDLKKTMQGMNQALMTTIAACGDINRNVMCNVNPEQSDVHAEVYEWSKKVSDHLLPETNAYHEIWLEDKKIVDSREESEPIYGSTYLPRKFKIGIAVPPSNDIDIYSQDLGFIAIVEEGKLLGFNVAVGGGMGMTHGDTNTYPQISRVIGFCVPEKVTEVAEKVVTIQRDFGNRSNRKNARFKYTIDSRGIDWFIDELNERLGWELEGKRHYEFDSNGDSYGWIEGKDYWHLTLFIQNGRIKDVEDYPLMTGLREIAKVHTGDFRLTPNQNLIIANVSSDNKKQINDLVEKFNLTEGKTYSGLRRNSMACVAFPTCGLAMAESERYLPELLDKIEVILDESGLREEEIVIRMSGCPNGCSRPALAEIAFIGKAPGKYNMYLGGSFNGSRLNKLYKENIGEEEILNTLRPIFIDFAKDKQKDEHFGDFVIRAGYVEEVKSGLDFHSSKEDVRS</sequence>
<organism>
    <name type="scientific">Oceanobacillus iheyensis (strain DSM 14371 / CIP 107618 / JCM 11309 / KCTC 3954 / HTE831)</name>
    <dbReference type="NCBI Taxonomy" id="221109"/>
    <lineage>
        <taxon>Bacteria</taxon>
        <taxon>Bacillati</taxon>
        <taxon>Bacillota</taxon>
        <taxon>Bacilli</taxon>
        <taxon>Bacillales</taxon>
        <taxon>Bacillaceae</taxon>
        <taxon>Oceanobacillus</taxon>
    </lineage>
</organism>
<keyword id="KW-0004">4Fe-4S</keyword>
<keyword id="KW-0028">Amino-acid biosynthesis</keyword>
<keyword id="KW-0198">Cysteine biosynthesis</keyword>
<keyword id="KW-0349">Heme</keyword>
<keyword id="KW-0408">Iron</keyword>
<keyword id="KW-0411">Iron-sulfur</keyword>
<keyword id="KW-0479">Metal-binding</keyword>
<keyword id="KW-0521">NADP</keyword>
<keyword id="KW-0560">Oxidoreductase</keyword>
<keyword id="KW-1185">Reference proteome</keyword>
<feature type="chain" id="PRO_0000388507" description="Sulfite reductase [NADPH] hemoprotein beta-component">
    <location>
        <begin position="1"/>
        <end position="576"/>
    </location>
</feature>
<feature type="binding site" evidence="1">
    <location>
        <position position="434"/>
    </location>
    <ligand>
        <name>[4Fe-4S] cluster</name>
        <dbReference type="ChEBI" id="CHEBI:49883"/>
    </ligand>
</feature>
<feature type="binding site" evidence="1">
    <location>
        <position position="440"/>
    </location>
    <ligand>
        <name>[4Fe-4S] cluster</name>
        <dbReference type="ChEBI" id="CHEBI:49883"/>
    </ligand>
</feature>
<feature type="binding site" evidence="1">
    <location>
        <position position="479"/>
    </location>
    <ligand>
        <name>[4Fe-4S] cluster</name>
        <dbReference type="ChEBI" id="CHEBI:49883"/>
    </ligand>
</feature>
<feature type="binding site" evidence="1">
    <location>
        <position position="483"/>
    </location>
    <ligand>
        <name>[4Fe-4S] cluster</name>
        <dbReference type="ChEBI" id="CHEBI:49883"/>
    </ligand>
</feature>
<feature type="binding site" description="axial binding residue" evidence="1">
    <location>
        <position position="483"/>
    </location>
    <ligand>
        <name>siroheme</name>
        <dbReference type="ChEBI" id="CHEBI:60052"/>
    </ligand>
    <ligandPart>
        <name>Fe</name>
        <dbReference type="ChEBI" id="CHEBI:18248"/>
    </ligandPart>
</feature>
<accession>Q8EQP0</accession>
<protein>
    <recommendedName>
        <fullName evidence="1">Sulfite reductase [NADPH] hemoprotein beta-component</fullName>
        <shortName evidence="1">SiR-HP</shortName>
        <shortName evidence="1">SiRHP</shortName>
        <ecNumber evidence="1">1.8.1.2</ecNumber>
    </recommendedName>
</protein>
<dbReference type="EC" id="1.8.1.2" evidence="1"/>
<dbReference type="EMBL" id="BA000028">
    <property type="protein sequence ID" value="BAC13610.1"/>
    <property type="molecule type" value="Genomic_DNA"/>
</dbReference>
<dbReference type="RefSeq" id="WP_011066055.1">
    <property type="nucleotide sequence ID" value="NC_004193.1"/>
</dbReference>
<dbReference type="SMR" id="Q8EQP0"/>
<dbReference type="STRING" id="221109.gene:10733894"/>
<dbReference type="KEGG" id="oih:OB1654"/>
<dbReference type="eggNOG" id="COG0155">
    <property type="taxonomic scope" value="Bacteria"/>
</dbReference>
<dbReference type="HOGENOM" id="CLU_001975_3_2_9"/>
<dbReference type="OrthoDB" id="9803707at2"/>
<dbReference type="PhylomeDB" id="Q8EQP0"/>
<dbReference type="UniPathway" id="UPA00140">
    <property type="reaction ID" value="UER00207"/>
</dbReference>
<dbReference type="Proteomes" id="UP000000822">
    <property type="component" value="Chromosome"/>
</dbReference>
<dbReference type="GO" id="GO:0009337">
    <property type="term" value="C:sulfite reductase complex (NADPH)"/>
    <property type="evidence" value="ECO:0007669"/>
    <property type="project" value="InterPro"/>
</dbReference>
<dbReference type="GO" id="GO:0051539">
    <property type="term" value="F:4 iron, 4 sulfur cluster binding"/>
    <property type="evidence" value="ECO:0007669"/>
    <property type="project" value="UniProtKB-KW"/>
</dbReference>
<dbReference type="GO" id="GO:0020037">
    <property type="term" value="F:heme binding"/>
    <property type="evidence" value="ECO:0007669"/>
    <property type="project" value="InterPro"/>
</dbReference>
<dbReference type="GO" id="GO:0046872">
    <property type="term" value="F:metal ion binding"/>
    <property type="evidence" value="ECO:0007669"/>
    <property type="project" value="UniProtKB-KW"/>
</dbReference>
<dbReference type="GO" id="GO:0050661">
    <property type="term" value="F:NADP binding"/>
    <property type="evidence" value="ECO:0007669"/>
    <property type="project" value="InterPro"/>
</dbReference>
<dbReference type="GO" id="GO:0050311">
    <property type="term" value="F:sulfite reductase (ferredoxin) activity"/>
    <property type="evidence" value="ECO:0007669"/>
    <property type="project" value="TreeGrafter"/>
</dbReference>
<dbReference type="GO" id="GO:0004783">
    <property type="term" value="F:sulfite reductase (NADPH) activity"/>
    <property type="evidence" value="ECO:0007669"/>
    <property type="project" value="UniProtKB-UniRule"/>
</dbReference>
<dbReference type="GO" id="GO:0019344">
    <property type="term" value="P:cysteine biosynthetic process"/>
    <property type="evidence" value="ECO:0007669"/>
    <property type="project" value="UniProtKB-KW"/>
</dbReference>
<dbReference type="GO" id="GO:0070814">
    <property type="term" value="P:hydrogen sulfide biosynthetic process"/>
    <property type="evidence" value="ECO:0007669"/>
    <property type="project" value="UniProtKB-UniRule"/>
</dbReference>
<dbReference type="GO" id="GO:0000103">
    <property type="term" value="P:sulfate assimilation"/>
    <property type="evidence" value="ECO:0007669"/>
    <property type="project" value="UniProtKB-UniRule"/>
</dbReference>
<dbReference type="FunFam" id="3.30.413.10:FF:000003">
    <property type="entry name" value="Sulfite reductase [NADPH] hemoprotein beta-component"/>
    <property type="match status" value="1"/>
</dbReference>
<dbReference type="FunFam" id="3.30.413.10:FF:000004">
    <property type="entry name" value="Sulfite reductase [NADPH] hemoprotein beta-component"/>
    <property type="match status" value="1"/>
</dbReference>
<dbReference type="Gene3D" id="3.90.480.20">
    <property type="match status" value="1"/>
</dbReference>
<dbReference type="Gene3D" id="3.30.413.10">
    <property type="entry name" value="Sulfite Reductase Hemoprotein, domain 1"/>
    <property type="match status" value="2"/>
</dbReference>
<dbReference type="HAMAP" id="MF_01540">
    <property type="entry name" value="CysI"/>
    <property type="match status" value="1"/>
</dbReference>
<dbReference type="InterPro" id="IPR011786">
    <property type="entry name" value="CysI"/>
</dbReference>
<dbReference type="InterPro" id="IPR005117">
    <property type="entry name" value="NiRdtase/SiRdtase_haem-b_fer"/>
</dbReference>
<dbReference type="InterPro" id="IPR036136">
    <property type="entry name" value="Nit/Sulf_reduc_fer-like_dom_sf"/>
</dbReference>
<dbReference type="InterPro" id="IPR006067">
    <property type="entry name" value="NO2/SO3_Rdtase_4Fe4S_dom"/>
</dbReference>
<dbReference type="InterPro" id="IPR045169">
    <property type="entry name" value="NO2/SO3_Rdtase_4Fe4S_prot"/>
</dbReference>
<dbReference type="InterPro" id="IPR045854">
    <property type="entry name" value="NO2/SO3_Rdtase_4Fe4S_sf"/>
</dbReference>
<dbReference type="InterPro" id="IPR006066">
    <property type="entry name" value="NO2/SO3_Rdtase_FeS/sirohaem_BS"/>
</dbReference>
<dbReference type="NCBIfam" id="TIGR02041">
    <property type="entry name" value="CysI"/>
    <property type="match status" value="1"/>
</dbReference>
<dbReference type="NCBIfam" id="NF010029">
    <property type="entry name" value="PRK13504.1"/>
    <property type="match status" value="1"/>
</dbReference>
<dbReference type="PANTHER" id="PTHR11493:SF47">
    <property type="entry name" value="SULFITE REDUCTASE [NADPH] SUBUNIT BETA"/>
    <property type="match status" value="1"/>
</dbReference>
<dbReference type="PANTHER" id="PTHR11493">
    <property type="entry name" value="SULFITE REDUCTASE [NADPH] SUBUNIT BETA-RELATED"/>
    <property type="match status" value="1"/>
</dbReference>
<dbReference type="Pfam" id="PF01077">
    <property type="entry name" value="NIR_SIR"/>
    <property type="match status" value="1"/>
</dbReference>
<dbReference type="Pfam" id="PF03460">
    <property type="entry name" value="NIR_SIR_ferr"/>
    <property type="match status" value="2"/>
</dbReference>
<dbReference type="PRINTS" id="PR00397">
    <property type="entry name" value="SIROHAEM"/>
</dbReference>
<dbReference type="SUPFAM" id="SSF56014">
    <property type="entry name" value="Nitrite and sulphite reductase 4Fe-4S domain-like"/>
    <property type="match status" value="2"/>
</dbReference>
<dbReference type="SUPFAM" id="SSF55124">
    <property type="entry name" value="Nitrite/Sulfite reductase N-terminal domain-like"/>
    <property type="match status" value="2"/>
</dbReference>
<dbReference type="PROSITE" id="PS00365">
    <property type="entry name" value="NIR_SIR"/>
    <property type="match status" value="1"/>
</dbReference>
<gene>
    <name evidence="1" type="primary">cysI</name>
    <name type="ordered locus">OB1654</name>
</gene>
<comment type="function">
    <text evidence="1">Component of the sulfite reductase complex that catalyzes the 6-electron reduction of sulfite to sulfide. This is one of several activities required for the biosynthesis of L-cysteine from sulfate.</text>
</comment>
<comment type="catalytic activity">
    <reaction evidence="1">
        <text>hydrogen sulfide + 3 NADP(+) + 3 H2O = sulfite + 3 NADPH + 4 H(+)</text>
        <dbReference type="Rhea" id="RHEA:13801"/>
        <dbReference type="ChEBI" id="CHEBI:15377"/>
        <dbReference type="ChEBI" id="CHEBI:15378"/>
        <dbReference type="ChEBI" id="CHEBI:17359"/>
        <dbReference type="ChEBI" id="CHEBI:29919"/>
        <dbReference type="ChEBI" id="CHEBI:57783"/>
        <dbReference type="ChEBI" id="CHEBI:58349"/>
        <dbReference type="EC" id="1.8.1.2"/>
    </reaction>
</comment>
<comment type="cofactor">
    <cofactor evidence="1">
        <name>siroheme</name>
        <dbReference type="ChEBI" id="CHEBI:60052"/>
    </cofactor>
    <text evidence="1">Binds 1 siroheme per subunit.</text>
</comment>
<comment type="cofactor">
    <cofactor evidence="1">
        <name>[4Fe-4S] cluster</name>
        <dbReference type="ChEBI" id="CHEBI:49883"/>
    </cofactor>
    <text evidence="1">Binds 1 [4Fe-4S] cluster per subunit.</text>
</comment>
<comment type="pathway">
    <text evidence="1">Sulfur metabolism; hydrogen sulfide biosynthesis; hydrogen sulfide from sulfite (NADPH route): step 1/1.</text>
</comment>
<comment type="subunit">
    <text evidence="1">Alpha(8)-beta(8). The alpha component is a flavoprotein, the beta component is a hemoprotein.</text>
</comment>
<comment type="similarity">
    <text evidence="1">Belongs to the nitrite and sulfite reductase 4Fe-4S domain family.</text>
</comment>
<evidence type="ECO:0000255" key="1">
    <source>
        <dbReference type="HAMAP-Rule" id="MF_01540"/>
    </source>
</evidence>
<proteinExistence type="inferred from homology"/>
<name>CYSI_OCEIH</name>
<reference key="1">
    <citation type="journal article" date="2002" name="Nucleic Acids Res.">
        <title>Genome sequence of Oceanobacillus iheyensis isolated from the Iheya Ridge and its unexpected adaptive capabilities to extreme environments.</title>
        <authorList>
            <person name="Takami H."/>
            <person name="Takaki Y."/>
            <person name="Uchiyama I."/>
        </authorList>
    </citation>
    <scope>NUCLEOTIDE SEQUENCE [LARGE SCALE GENOMIC DNA]</scope>
    <source>
        <strain>DSM 14371 / CIP 107618 / JCM 11309 / KCTC 3954 / HTE831</strain>
    </source>
</reference>